<proteinExistence type="inferred from homology"/>
<reference key="1">
    <citation type="journal article" date="2003" name="Proc. Natl. Acad. Sci. U.S.A.">
        <title>Genome sequence of the cyanobacterium Prochlorococcus marinus SS120, a nearly minimal oxyphototrophic genome.</title>
        <authorList>
            <person name="Dufresne A."/>
            <person name="Salanoubat M."/>
            <person name="Partensky F."/>
            <person name="Artiguenave F."/>
            <person name="Axmann I.M."/>
            <person name="Barbe V."/>
            <person name="Duprat S."/>
            <person name="Galperin M.Y."/>
            <person name="Koonin E.V."/>
            <person name="Le Gall F."/>
            <person name="Makarova K.S."/>
            <person name="Ostrowski M."/>
            <person name="Oztas S."/>
            <person name="Robert C."/>
            <person name="Rogozin I.B."/>
            <person name="Scanlan D.J."/>
            <person name="Tandeau de Marsac N."/>
            <person name="Weissenbach J."/>
            <person name="Wincker P."/>
            <person name="Wolf Y.I."/>
            <person name="Hess W.R."/>
        </authorList>
    </citation>
    <scope>NUCLEOTIDE SEQUENCE [LARGE SCALE GENOMIC DNA]</scope>
    <source>
        <strain>SARG / CCMP1375 / SS120</strain>
    </source>
</reference>
<keyword id="KW-0201">Cytochrome c-type biogenesis</keyword>
<keyword id="KW-0472">Membrane</keyword>
<keyword id="KW-1185">Reference proteome</keyword>
<keyword id="KW-0793">Thylakoid</keyword>
<keyword id="KW-0812">Transmembrane</keyword>
<keyword id="KW-1133">Transmembrane helix</keyword>
<organism>
    <name type="scientific">Prochlorococcus marinus (strain SARG / CCMP1375 / SS120)</name>
    <dbReference type="NCBI Taxonomy" id="167539"/>
    <lineage>
        <taxon>Bacteria</taxon>
        <taxon>Bacillati</taxon>
        <taxon>Cyanobacteriota</taxon>
        <taxon>Cyanophyceae</taxon>
        <taxon>Synechococcales</taxon>
        <taxon>Prochlorococcaceae</taxon>
        <taxon>Prochlorococcus</taxon>
    </lineage>
</organism>
<dbReference type="EMBL" id="AE017126">
    <property type="protein sequence ID" value="AAQ00657.1"/>
    <property type="molecule type" value="Genomic_DNA"/>
</dbReference>
<dbReference type="RefSeq" id="NP_876004.1">
    <property type="nucleotide sequence ID" value="NC_005042.1"/>
</dbReference>
<dbReference type="RefSeq" id="WP_011125763.1">
    <property type="nucleotide sequence ID" value="NC_005042.1"/>
</dbReference>
<dbReference type="STRING" id="167539.Pro_1613"/>
<dbReference type="EnsemblBacteria" id="AAQ00657">
    <property type="protein sequence ID" value="AAQ00657"/>
    <property type="gene ID" value="Pro_1613"/>
</dbReference>
<dbReference type="KEGG" id="pma:Pro_1613"/>
<dbReference type="PATRIC" id="fig|167539.5.peg.1705"/>
<dbReference type="eggNOG" id="COG1333">
    <property type="taxonomic scope" value="Bacteria"/>
</dbReference>
<dbReference type="HOGENOM" id="CLU_034630_0_0_3"/>
<dbReference type="OrthoDB" id="9770923at2"/>
<dbReference type="Proteomes" id="UP000001420">
    <property type="component" value="Chromosome"/>
</dbReference>
<dbReference type="GO" id="GO:0031676">
    <property type="term" value="C:plasma membrane-derived thylakoid membrane"/>
    <property type="evidence" value="ECO:0007669"/>
    <property type="project" value="UniProtKB-SubCell"/>
</dbReference>
<dbReference type="GO" id="GO:0017004">
    <property type="term" value="P:cytochrome complex assembly"/>
    <property type="evidence" value="ECO:0007669"/>
    <property type="project" value="UniProtKB-UniRule"/>
</dbReference>
<dbReference type="HAMAP" id="MF_01392">
    <property type="entry name" value="CytC_Ccs1"/>
    <property type="match status" value="1"/>
</dbReference>
<dbReference type="InterPro" id="IPR023494">
    <property type="entry name" value="Cyt_c_bgen_Ccs1/CcsB/ResB"/>
</dbReference>
<dbReference type="InterPro" id="IPR007816">
    <property type="entry name" value="ResB-like_domain"/>
</dbReference>
<dbReference type="PANTHER" id="PTHR31566">
    <property type="entry name" value="CYTOCHROME C BIOGENESIS PROTEIN CCS1, CHLOROPLASTIC"/>
    <property type="match status" value="1"/>
</dbReference>
<dbReference type="PANTHER" id="PTHR31566:SF0">
    <property type="entry name" value="CYTOCHROME C BIOGENESIS PROTEIN CCS1, CHLOROPLASTIC"/>
    <property type="match status" value="1"/>
</dbReference>
<dbReference type="Pfam" id="PF05140">
    <property type="entry name" value="ResB"/>
    <property type="match status" value="2"/>
</dbReference>
<comment type="function">
    <text evidence="1">Required during biogenesis of c-type cytochromes (cytochrome c6 and cytochrome f) at the step of heme attachment.</text>
</comment>
<comment type="subunit">
    <text evidence="1">May interact with CcsA.</text>
</comment>
<comment type="subcellular location">
    <subcellularLocation>
        <location evidence="1">Cellular thylakoid membrane</location>
        <topology evidence="1">Multi-pass membrane protein</topology>
    </subcellularLocation>
</comment>
<comment type="similarity">
    <text evidence="1">Belongs to the Ccs1/CcsB family.</text>
</comment>
<gene>
    <name evidence="1" type="primary">ccsB</name>
    <name evidence="1" type="synonym">ccs1</name>
    <name type="ordered locus">Pro_1613</name>
</gene>
<feature type="chain" id="PRO_0000363616" description="Cytochrome c biogenesis protein CcsB">
    <location>
        <begin position="1"/>
        <end position="429"/>
    </location>
</feature>
<feature type="transmembrane region" description="Helical" evidence="1">
    <location>
        <begin position="14"/>
        <end position="34"/>
    </location>
</feature>
<feature type="transmembrane region" description="Helical" evidence="1">
    <location>
        <begin position="72"/>
        <end position="92"/>
    </location>
</feature>
<feature type="transmembrane region" description="Helical" evidence="1">
    <location>
        <begin position="162"/>
        <end position="182"/>
    </location>
</feature>
<evidence type="ECO:0000255" key="1">
    <source>
        <dbReference type="HAMAP-Rule" id="MF_01392"/>
    </source>
</evidence>
<sequence length="429" mass="48044">MKYLRKIINWLSSLKVAIVLLILIALGSALGTALPQGEKAESYLKNYEVTRFLGVINGDLLLQLQLDHVYSSFWFLFLLTWLSFSLIICSWKRQWPSLKKAIDWIDYKEPKQIQKLAISQSFRIQKNDNGINPLANYLENNGWQVKIKSSRLAARKGLIGRVGPPLVHFGLILLIIGATYGVLKGQRLEKFLAPERSLNLLSPNGISKVSVKLTDFKIDRDPTGKPEQFRSKLELHNNNINKSIYEEISVNHPLRFQGITLYQADWSLAAITIQINNSPKIQFPLNKIDELGDQVWGIVLPQMPDSDLKPLLLTLSSEQGPVRFFSEEGNPAGIGRPNGNPILIGTSKISIIDVIPSSGILLKYDPGVPIVYLGFAISLIGSVFSIISTKQLWIIQEEESRLMHIGGLSNRNLSGFANQFNSIIKAAYD</sequence>
<accession>Q7VA54</accession>
<name>CCS1_PROMA</name>
<protein>
    <recommendedName>
        <fullName evidence="1">Cytochrome c biogenesis protein CcsB</fullName>
    </recommendedName>
</protein>